<proteinExistence type="inferred from homology"/>
<evidence type="ECO:0000255" key="1">
    <source>
        <dbReference type="HAMAP-Rule" id="MF_01351"/>
    </source>
</evidence>
<comment type="function">
    <text evidence="1">NDH shuttles electrons from NAD(P)H:plastoquinone, via FMN and iron-sulfur (Fe-S) centers, to quinones in the photosynthetic chain and possibly in a chloroplast respiratory chain. The immediate electron acceptor for the enzyme in this species is believed to be plastoquinone. Couples the redox reaction to proton translocation, and thus conserves the redox energy in a proton gradient.</text>
</comment>
<comment type="catalytic activity">
    <reaction evidence="1">
        <text>a plastoquinone + NADH + (n+1) H(+)(in) = a plastoquinol + NAD(+) + n H(+)(out)</text>
        <dbReference type="Rhea" id="RHEA:42608"/>
        <dbReference type="Rhea" id="RHEA-COMP:9561"/>
        <dbReference type="Rhea" id="RHEA-COMP:9562"/>
        <dbReference type="ChEBI" id="CHEBI:15378"/>
        <dbReference type="ChEBI" id="CHEBI:17757"/>
        <dbReference type="ChEBI" id="CHEBI:57540"/>
        <dbReference type="ChEBI" id="CHEBI:57945"/>
        <dbReference type="ChEBI" id="CHEBI:62192"/>
    </reaction>
</comment>
<comment type="catalytic activity">
    <reaction evidence="1">
        <text>a plastoquinone + NADPH + (n+1) H(+)(in) = a plastoquinol + NADP(+) + n H(+)(out)</text>
        <dbReference type="Rhea" id="RHEA:42612"/>
        <dbReference type="Rhea" id="RHEA-COMP:9561"/>
        <dbReference type="Rhea" id="RHEA-COMP:9562"/>
        <dbReference type="ChEBI" id="CHEBI:15378"/>
        <dbReference type="ChEBI" id="CHEBI:17757"/>
        <dbReference type="ChEBI" id="CHEBI:57783"/>
        <dbReference type="ChEBI" id="CHEBI:58349"/>
        <dbReference type="ChEBI" id="CHEBI:62192"/>
    </reaction>
</comment>
<comment type="cofactor">
    <cofactor evidence="1">
        <name>[4Fe-4S] cluster</name>
        <dbReference type="ChEBI" id="CHEBI:49883"/>
    </cofactor>
    <text evidence="1">Binds 2 [4Fe-4S] clusters per subunit.</text>
</comment>
<comment type="subunit">
    <text evidence="1">NDH is composed of at least 16 different subunits, 5 of which are encoded in the nucleus.</text>
</comment>
<comment type="subcellular location">
    <subcellularLocation>
        <location evidence="1">Plastid</location>
        <location evidence="1">Chloroplast thylakoid membrane</location>
        <topology evidence="1">Peripheral membrane protein</topology>
    </subcellularLocation>
</comment>
<comment type="similarity">
    <text evidence="1">Belongs to the complex I 23 kDa subunit family.</text>
</comment>
<organism>
    <name type="scientific">Hymenopappus filifolius var. filifolius</name>
    <name type="common">Fineleaf hymenopappus</name>
    <dbReference type="NCBI Taxonomy" id="176542"/>
    <lineage>
        <taxon>Eukaryota</taxon>
        <taxon>Viridiplantae</taxon>
        <taxon>Streptophyta</taxon>
        <taxon>Embryophyta</taxon>
        <taxon>Tracheophyta</taxon>
        <taxon>Spermatophyta</taxon>
        <taxon>Magnoliopsida</taxon>
        <taxon>eudicotyledons</taxon>
        <taxon>Gunneridae</taxon>
        <taxon>Pentapetalae</taxon>
        <taxon>asterids</taxon>
        <taxon>campanulids</taxon>
        <taxon>Asterales</taxon>
        <taxon>Asteraceae</taxon>
        <taxon>Asteroideae</taxon>
        <taxon>Heliantheae alliance</taxon>
        <taxon>Bahieae</taxon>
        <taxon>Hymenopappus</taxon>
    </lineage>
</organism>
<name>NDHI_HYMFF</name>
<gene>
    <name evidence="1" type="primary">ndhI</name>
</gene>
<protein>
    <recommendedName>
        <fullName evidence="1">NAD(P)H-quinone oxidoreductase subunit I, chloroplastic</fullName>
        <ecNumber evidence="1">7.1.1.-</ecNumber>
    </recommendedName>
    <alternativeName>
        <fullName evidence="1">NAD(P)H dehydrogenase subunit I</fullName>
        <shortName evidence="1">NDH subunit I</shortName>
    </alternativeName>
    <alternativeName>
        <fullName evidence="1">NADH-plastoquinone oxidoreductase subunit I</fullName>
    </alternativeName>
</protein>
<reference key="1">
    <citation type="submission" date="2003-01" db="EMBL/GenBank/DDBJ databases">
        <title>Chloroplast DNA phylogeny of tribe Heliantheae (Asteraceae).</title>
        <authorList>
            <person name="Panero J.L."/>
            <person name="Baldwin B.G."/>
            <person name="Schilling E.E."/>
            <person name="Clevinger J.A."/>
        </authorList>
    </citation>
    <scope>NUCLEOTIDE SEQUENCE [GENOMIC DNA]</scope>
</reference>
<dbReference type="EC" id="7.1.1.-" evidence="1"/>
<dbReference type="EMBL" id="AF383799">
    <property type="protein sequence ID" value="AAN61740.1"/>
    <property type="molecule type" value="Genomic_DNA"/>
</dbReference>
<dbReference type="SMR" id="Q8HVR4"/>
<dbReference type="GO" id="GO:0009535">
    <property type="term" value="C:chloroplast thylakoid membrane"/>
    <property type="evidence" value="ECO:0007669"/>
    <property type="project" value="UniProtKB-SubCell"/>
</dbReference>
<dbReference type="GO" id="GO:0051539">
    <property type="term" value="F:4 iron, 4 sulfur cluster binding"/>
    <property type="evidence" value="ECO:0007669"/>
    <property type="project" value="UniProtKB-KW"/>
</dbReference>
<dbReference type="GO" id="GO:0005506">
    <property type="term" value="F:iron ion binding"/>
    <property type="evidence" value="ECO:0007669"/>
    <property type="project" value="UniProtKB-UniRule"/>
</dbReference>
<dbReference type="GO" id="GO:0008137">
    <property type="term" value="F:NADH dehydrogenase (ubiquinone) activity"/>
    <property type="evidence" value="ECO:0007669"/>
    <property type="project" value="InterPro"/>
</dbReference>
<dbReference type="GO" id="GO:0048038">
    <property type="term" value="F:quinone binding"/>
    <property type="evidence" value="ECO:0007669"/>
    <property type="project" value="UniProtKB-KW"/>
</dbReference>
<dbReference type="GO" id="GO:0019684">
    <property type="term" value="P:photosynthesis, light reaction"/>
    <property type="evidence" value="ECO:0007669"/>
    <property type="project" value="UniProtKB-UniRule"/>
</dbReference>
<dbReference type="FunFam" id="3.30.70.3270:FF:000006">
    <property type="entry name" value="NAD(P)H-quinone oxidoreductase subunit I, chloroplastic"/>
    <property type="match status" value="1"/>
</dbReference>
<dbReference type="Gene3D" id="3.30.70.3270">
    <property type="match status" value="1"/>
</dbReference>
<dbReference type="HAMAP" id="MF_01351">
    <property type="entry name" value="NDH1_NuoI"/>
    <property type="match status" value="1"/>
</dbReference>
<dbReference type="InterPro" id="IPR017896">
    <property type="entry name" value="4Fe4S_Fe-S-bd"/>
</dbReference>
<dbReference type="InterPro" id="IPR017900">
    <property type="entry name" value="4Fe4S_Fe_S_CS"/>
</dbReference>
<dbReference type="InterPro" id="IPR010226">
    <property type="entry name" value="NADH_quinone_OxRdtase_chainI"/>
</dbReference>
<dbReference type="InterPro" id="IPR004497">
    <property type="entry name" value="NDHI"/>
</dbReference>
<dbReference type="NCBIfam" id="TIGR00403">
    <property type="entry name" value="ndhI"/>
    <property type="match status" value="1"/>
</dbReference>
<dbReference type="NCBIfam" id="TIGR01971">
    <property type="entry name" value="NuoI"/>
    <property type="match status" value="1"/>
</dbReference>
<dbReference type="NCBIfam" id="NF004537">
    <property type="entry name" value="PRK05888.1-3"/>
    <property type="match status" value="1"/>
</dbReference>
<dbReference type="PANTHER" id="PTHR47275">
    <property type="entry name" value="NAD(P)H-QUINONE OXIDOREDUCTASE SUBUNIT I, CHLOROPLASTIC"/>
    <property type="match status" value="1"/>
</dbReference>
<dbReference type="PANTHER" id="PTHR47275:SF1">
    <property type="entry name" value="NAD(P)H-QUINONE OXIDOREDUCTASE SUBUNIT I, CHLOROPLASTIC"/>
    <property type="match status" value="1"/>
</dbReference>
<dbReference type="Pfam" id="PF00037">
    <property type="entry name" value="Fer4"/>
    <property type="match status" value="2"/>
</dbReference>
<dbReference type="SUPFAM" id="SSF54862">
    <property type="entry name" value="4Fe-4S ferredoxins"/>
    <property type="match status" value="1"/>
</dbReference>
<dbReference type="PROSITE" id="PS00198">
    <property type="entry name" value="4FE4S_FER_1"/>
    <property type="match status" value="2"/>
</dbReference>
<dbReference type="PROSITE" id="PS51379">
    <property type="entry name" value="4FE4S_FER_2"/>
    <property type="match status" value="2"/>
</dbReference>
<accession>Q8HVR4</accession>
<feature type="chain" id="PRO_0000250799" description="NAD(P)H-quinone oxidoreductase subunit I, chloroplastic">
    <location>
        <begin position="1"/>
        <end position="166"/>
    </location>
</feature>
<feature type="domain" description="4Fe-4S ferredoxin-type 1" evidence="1">
    <location>
        <begin position="55"/>
        <end position="84"/>
    </location>
</feature>
<feature type="domain" description="4Fe-4S ferredoxin-type 2" evidence="1">
    <location>
        <begin position="95"/>
        <end position="124"/>
    </location>
</feature>
<feature type="binding site" evidence="1">
    <location>
        <position position="64"/>
    </location>
    <ligand>
        <name>[4Fe-4S] cluster</name>
        <dbReference type="ChEBI" id="CHEBI:49883"/>
        <label>1</label>
    </ligand>
</feature>
<feature type="binding site" evidence="1">
    <location>
        <position position="67"/>
    </location>
    <ligand>
        <name>[4Fe-4S] cluster</name>
        <dbReference type="ChEBI" id="CHEBI:49883"/>
        <label>1</label>
    </ligand>
</feature>
<feature type="binding site" evidence="1">
    <location>
        <position position="70"/>
    </location>
    <ligand>
        <name>[4Fe-4S] cluster</name>
        <dbReference type="ChEBI" id="CHEBI:49883"/>
        <label>1</label>
    </ligand>
</feature>
<feature type="binding site" evidence="1">
    <location>
        <position position="74"/>
    </location>
    <ligand>
        <name>[4Fe-4S] cluster</name>
        <dbReference type="ChEBI" id="CHEBI:49883"/>
        <label>2</label>
    </ligand>
</feature>
<feature type="binding site" evidence="1">
    <location>
        <position position="104"/>
    </location>
    <ligand>
        <name>[4Fe-4S] cluster</name>
        <dbReference type="ChEBI" id="CHEBI:49883"/>
        <label>2</label>
    </ligand>
</feature>
<feature type="binding site" evidence="1">
    <location>
        <position position="107"/>
    </location>
    <ligand>
        <name>[4Fe-4S] cluster</name>
        <dbReference type="ChEBI" id="CHEBI:49883"/>
        <label>2</label>
    </ligand>
</feature>
<feature type="binding site" evidence="1">
    <location>
        <position position="110"/>
    </location>
    <ligand>
        <name>[4Fe-4S] cluster</name>
        <dbReference type="ChEBI" id="CHEBI:49883"/>
        <label>2</label>
    </ligand>
</feature>
<feature type="binding site" evidence="1">
    <location>
        <position position="114"/>
    </location>
    <ligand>
        <name>[4Fe-4S] cluster</name>
        <dbReference type="ChEBI" id="CHEBI:49883"/>
        <label>1</label>
    </ligand>
</feature>
<geneLocation type="chloroplast"/>
<sequence length="166" mass="19509">MFPMVTEFMNYGQQTVRAARYIGQGFMITLSHANRLPVTIQYPYEKLITSERFRGRIHFEFDKCIACEVCVRVCPIDLPVVDWKLETDIRKKRLLNYSIDFGICIFCGNCVEYCPTNCLSMTEEYELSTYDRHELNYNQIALGRLPMSIIDDYTIRTIFNLPEIKT</sequence>
<keyword id="KW-0004">4Fe-4S</keyword>
<keyword id="KW-0150">Chloroplast</keyword>
<keyword id="KW-0408">Iron</keyword>
<keyword id="KW-0411">Iron-sulfur</keyword>
<keyword id="KW-0472">Membrane</keyword>
<keyword id="KW-0479">Metal-binding</keyword>
<keyword id="KW-0520">NAD</keyword>
<keyword id="KW-0521">NADP</keyword>
<keyword id="KW-0934">Plastid</keyword>
<keyword id="KW-0618">Plastoquinone</keyword>
<keyword id="KW-0874">Quinone</keyword>
<keyword id="KW-0677">Repeat</keyword>
<keyword id="KW-0793">Thylakoid</keyword>
<keyword id="KW-1278">Translocase</keyword>